<evidence type="ECO:0000255" key="1">
    <source>
        <dbReference type="HAMAP-Rule" id="MF_00091"/>
    </source>
</evidence>
<keyword id="KW-0071">Autoinducer synthesis</keyword>
<keyword id="KW-0408">Iron</keyword>
<keyword id="KW-0456">Lyase</keyword>
<keyword id="KW-0479">Metal-binding</keyword>
<keyword id="KW-0673">Quorum sensing</keyword>
<organism>
    <name type="scientific">Haemophilus influenzae (strain PittEE)</name>
    <dbReference type="NCBI Taxonomy" id="374930"/>
    <lineage>
        <taxon>Bacteria</taxon>
        <taxon>Pseudomonadati</taxon>
        <taxon>Pseudomonadota</taxon>
        <taxon>Gammaproteobacteria</taxon>
        <taxon>Pasteurellales</taxon>
        <taxon>Pasteurellaceae</taxon>
        <taxon>Haemophilus</taxon>
    </lineage>
</organism>
<dbReference type="EC" id="4.4.1.21" evidence="1"/>
<dbReference type="EMBL" id="CP000671">
    <property type="protein sequence ID" value="ABQ97600.1"/>
    <property type="molecule type" value="Genomic_DNA"/>
</dbReference>
<dbReference type="SMR" id="A5U9Z9"/>
<dbReference type="KEGG" id="hip:CGSHiEE_00530"/>
<dbReference type="HOGENOM" id="CLU_107531_2_0_6"/>
<dbReference type="GO" id="GO:0005506">
    <property type="term" value="F:iron ion binding"/>
    <property type="evidence" value="ECO:0007669"/>
    <property type="project" value="InterPro"/>
</dbReference>
<dbReference type="GO" id="GO:0043768">
    <property type="term" value="F:S-ribosylhomocysteine lyase activity"/>
    <property type="evidence" value="ECO:0007669"/>
    <property type="project" value="UniProtKB-UniRule"/>
</dbReference>
<dbReference type="GO" id="GO:0009372">
    <property type="term" value="P:quorum sensing"/>
    <property type="evidence" value="ECO:0007669"/>
    <property type="project" value="UniProtKB-UniRule"/>
</dbReference>
<dbReference type="Gene3D" id="3.30.1360.80">
    <property type="entry name" value="S-ribosylhomocysteinase (LuxS)"/>
    <property type="match status" value="1"/>
</dbReference>
<dbReference type="HAMAP" id="MF_00091">
    <property type="entry name" value="LuxS"/>
    <property type="match status" value="1"/>
</dbReference>
<dbReference type="InterPro" id="IPR037005">
    <property type="entry name" value="LuxS_sf"/>
</dbReference>
<dbReference type="InterPro" id="IPR011249">
    <property type="entry name" value="Metalloenz_LuxS/M16"/>
</dbReference>
<dbReference type="InterPro" id="IPR003815">
    <property type="entry name" value="S-ribosylhomocysteinase"/>
</dbReference>
<dbReference type="NCBIfam" id="NF002602">
    <property type="entry name" value="PRK02260.1-2"/>
    <property type="match status" value="1"/>
</dbReference>
<dbReference type="PANTHER" id="PTHR35799">
    <property type="entry name" value="S-RIBOSYLHOMOCYSTEINE LYASE"/>
    <property type="match status" value="1"/>
</dbReference>
<dbReference type="PANTHER" id="PTHR35799:SF1">
    <property type="entry name" value="S-RIBOSYLHOMOCYSTEINE LYASE"/>
    <property type="match status" value="1"/>
</dbReference>
<dbReference type="Pfam" id="PF02664">
    <property type="entry name" value="LuxS"/>
    <property type="match status" value="1"/>
</dbReference>
<dbReference type="PIRSF" id="PIRSF006160">
    <property type="entry name" value="AI2"/>
    <property type="match status" value="1"/>
</dbReference>
<dbReference type="PRINTS" id="PR01487">
    <property type="entry name" value="LUXSPROTEIN"/>
</dbReference>
<dbReference type="SUPFAM" id="SSF63411">
    <property type="entry name" value="LuxS/MPP-like metallohydrolase"/>
    <property type="match status" value="1"/>
</dbReference>
<proteinExistence type="inferred from homology"/>
<reference key="1">
    <citation type="journal article" date="2007" name="Genome Biol.">
        <title>Characterization and modeling of the Haemophilus influenzae core and supragenomes based on the complete genomic sequences of Rd and 12 clinical nontypeable strains.</title>
        <authorList>
            <person name="Hogg J.S."/>
            <person name="Hu F.Z."/>
            <person name="Janto B."/>
            <person name="Boissy R."/>
            <person name="Hayes J."/>
            <person name="Keefe R."/>
            <person name="Post J.C."/>
            <person name="Ehrlich G.D."/>
        </authorList>
    </citation>
    <scope>NUCLEOTIDE SEQUENCE [LARGE SCALE GENOMIC DNA]</scope>
    <source>
        <strain>PittEE</strain>
    </source>
</reference>
<feature type="chain" id="PRO_1000004844" description="S-ribosylhomocysteine lyase">
    <location>
        <begin position="1"/>
        <end position="167"/>
    </location>
</feature>
<feature type="binding site" evidence="1">
    <location>
        <position position="54"/>
    </location>
    <ligand>
        <name>Fe cation</name>
        <dbReference type="ChEBI" id="CHEBI:24875"/>
    </ligand>
</feature>
<feature type="binding site" evidence="1">
    <location>
        <position position="58"/>
    </location>
    <ligand>
        <name>Fe cation</name>
        <dbReference type="ChEBI" id="CHEBI:24875"/>
    </ligand>
</feature>
<feature type="binding site" evidence="1">
    <location>
        <position position="128"/>
    </location>
    <ligand>
        <name>Fe cation</name>
        <dbReference type="ChEBI" id="CHEBI:24875"/>
    </ligand>
</feature>
<sequence>MPLLDSFKVDHTKMNAPAVRIAKTMRTPKGDNITVFDLRFCIPNKEILSPKGIHTLEHLFAGFMRDHLNGDSIEIIDISPMGCRTGFYMSLIGTPNEQEVSEAWLASMQDVLGVQDQASIPELNIYQCGSYTEHSLEDAHEIAKNVIARGIGVNKNEDLSLDNSLLK</sequence>
<name>LUXS_HAEIE</name>
<gene>
    <name evidence="1" type="primary">luxS</name>
    <name type="ordered locus">CGSHiEE_00530</name>
</gene>
<protein>
    <recommendedName>
        <fullName evidence="1">S-ribosylhomocysteine lyase</fullName>
        <ecNumber evidence="1">4.4.1.21</ecNumber>
    </recommendedName>
    <alternativeName>
        <fullName evidence="1">AI-2 synthesis protein</fullName>
    </alternativeName>
    <alternativeName>
        <fullName evidence="1">Autoinducer-2 production protein LuxS</fullName>
    </alternativeName>
</protein>
<accession>A5U9Z9</accession>
<comment type="function">
    <text evidence="1">Involved in the synthesis of autoinducer 2 (AI-2) which is secreted by bacteria and is used to communicate both the cell density and the metabolic potential of the environment. The regulation of gene expression in response to changes in cell density is called quorum sensing. Catalyzes the transformation of S-ribosylhomocysteine (RHC) to homocysteine (HC) and 4,5-dihydroxy-2,3-pentadione (DPD).</text>
</comment>
<comment type="catalytic activity">
    <reaction evidence="1">
        <text>S-(5-deoxy-D-ribos-5-yl)-L-homocysteine = (S)-4,5-dihydroxypentane-2,3-dione + L-homocysteine</text>
        <dbReference type="Rhea" id="RHEA:17753"/>
        <dbReference type="ChEBI" id="CHEBI:29484"/>
        <dbReference type="ChEBI" id="CHEBI:58195"/>
        <dbReference type="ChEBI" id="CHEBI:58199"/>
        <dbReference type="EC" id="4.4.1.21"/>
    </reaction>
</comment>
<comment type="cofactor">
    <cofactor evidence="1">
        <name>Fe cation</name>
        <dbReference type="ChEBI" id="CHEBI:24875"/>
    </cofactor>
    <text evidence="1">Binds 1 Fe cation per subunit.</text>
</comment>
<comment type="subunit">
    <text evidence="1">Homodimer.</text>
</comment>
<comment type="similarity">
    <text evidence="1">Belongs to the LuxS family.</text>
</comment>